<protein>
    <recommendedName>
        <fullName evidence="1">Nucleotide-binding protein BC_1159</fullName>
    </recommendedName>
</protein>
<gene>
    <name type="ordered locus">BC_1159</name>
</gene>
<proteinExistence type="inferred from homology"/>
<dbReference type="EMBL" id="AE016877">
    <property type="protein sequence ID" value="AAP08146.1"/>
    <property type="status" value="ALT_INIT"/>
    <property type="molecule type" value="Genomic_DNA"/>
</dbReference>
<dbReference type="RefSeq" id="NP_830945.2">
    <property type="nucleotide sequence ID" value="NC_004722.1"/>
</dbReference>
<dbReference type="RefSeq" id="WP_001040149.1">
    <property type="nucleotide sequence ID" value="NZ_CP138336.1"/>
</dbReference>
<dbReference type="SMR" id="Q81GN2"/>
<dbReference type="STRING" id="226900.BC_1159"/>
<dbReference type="KEGG" id="bce:BC1159"/>
<dbReference type="PATRIC" id="fig|226900.8.peg.1123"/>
<dbReference type="HOGENOM" id="CLU_099839_1_0_9"/>
<dbReference type="OrthoDB" id="9801447at2"/>
<dbReference type="Proteomes" id="UP000001417">
    <property type="component" value="Chromosome"/>
</dbReference>
<dbReference type="GO" id="GO:0005829">
    <property type="term" value="C:cytosol"/>
    <property type="evidence" value="ECO:0000318"/>
    <property type="project" value="GO_Central"/>
</dbReference>
<dbReference type="GO" id="GO:0000166">
    <property type="term" value="F:nucleotide binding"/>
    <property type="evidence" value="ECO:0000318"/>
    <property type="project" value="GO_Central"/>
</dbReference>
<dbReference type="CDD" id="cd11740">
    <property type="entry name" value="YajQ_like"/>
    <property type="match status" value="1"/>
</dbReference>
<dbReference type="FunFam" id="3.30.70.990:FF:000002">
    <property type="entry name" value="UPF0234 protein LEP1GSC067_4943"/>
    <property type="match status" value="1"/>
</dbReference>
<dbReference type="FunFam" id="3.30.70.860:FF:000003">
    <property type="entry name" value="UPF0234 protein YBT020_06460"/>
    <property type="match status" value="1"/>
</dbReference>
<dbReference type="Gene3D" id="3.30.70.860">
    <property type="match status" value="1"/>
</dbReference>
<dbReference type="Gene3D" id="3.30.70.990">
    <property type="entry name" value="YajQ-like, domain 2"/>
    <property type="match status" value="1"/>
</dbReference>
<dbReference type="HAMAP" id="MF_00632">
    <property type="entry name" value="YajQ"/>
    <property type="match status" value="1"/>
</dbReference>
<dbReference type="InterPro" id="IPR007551">
    <property type="entry name" value="DUF520"/>
</dbReference>
<dbReference type="InterPro" id="IPR035571">
    <property type="entry name" value="UPF0234-like_C"/>
</dbReference>
<dbReference type="InterPro" id="IPR035570">
    <property type="entry name" value="UPF0234_N"/>
</dbReference>
<dbReference type="InterPro" id="IPR036183">
    <property type="entry name" value="YajQ-like_sf"/>
</dbReference>
<dbReference type="NCBIfam" id="NF003819">
    <property type="entry name" value="PRK05412.1"/>
    <property type="match status" value="1"/>
</dbReference>
<dbReference type="PANTHER" id="PTHR30476">
    <property type="entry name" value="UPF0234 PROTEIN YAJQ"/>
    <property type="match status" value="1"/>
</dbReference>
<dbReference type="PANTHER" id="PTHR30476:SF0">
    <property type="entry name" value="UPF0234 PROTEIN YAJQ"/>
    <property type="match status" value="1"/>
</dbReference>
<dbReference type="Pfam" id="PF04461">
    <property type="entry name" value="DUF520"/>
    <property type="match status" value="1"/>
</dbReference>
<dbReference type="SUPFAM" id="SSF89963">
    <property type="entry name" value="YajQ-like"/>
    <property type="match status" value="2"/>
</dbReference>
<comment type="function">
    <text evidence="1">Nucleotide-binding protein.</text>
</comment>
<comment type="similarity">
    <text evidence="1">Belongs to the YajQ family.</text>
</comment>
<comment type="sequence caution" evidence="2">
    <conflict type="erroneous initiation">
        <sequence resource="EMBL-CDS" id="AAP08146"/>
    </conflict>
</comment>
<accession>Q81GN2</accession>
<sequence>MAKDSSFDIVSKVELPEVTNAINIALKEIQNRYDFKGSKSDIKLEKEVLVLTSDDEFKLEQVKDVLISKLVKRNVPIKNLDYGKVEAATGNTVRQRATLQQGIDKDNAKKINNIIKEMKLKVKTQVQDDQVRVTAKSRDDLQAVIAAVRSADLPIDVQFINYR</sequence>
<keyword id="KW-0547">Nucleotide-binding</keyword>
<keyword id="KW-1185">Reference proteome</keyword>
<organism>
    <name type="scientific">Bacillus cereus (strain ATCC 14579 / DSM 31 / CCUG 7414 / JCM 2152 / NBRC 15305 / NCIMB 9373 / NCTC 2599 / NRRL B-3711)</name>
    <dbReference type="NCBI Taxonomy" id="226900"/>
    <lineage>
        <taxon>Bacteria</taxon>
        <taxon>Bacillati</taxon>
        <taxon>Bacillota</taxon>
        <taxon>Bacilli</taxon>
        <taxon>Bacillales</taxon>
        <taxon>Bacillaceae</taxon>
        <taxon>Bacillus</taxon>
        <taxon>Bacillus cereus group</taxon>
    </lineage>
</organism>
<evidence type="ECO:0000255" key="1">
    <source>
        <dbReference type="HAMAP-Rule" id="MF_00632"/>
    </source>
</evidence>
<evidence type="ECO:0000305" key="2"/>
<reference key="1">
    <citation type="journal article" date="2003" name="Nature">
        <title>Genome sequence of Bacillus cereus and comparative analysis with Bacillus anthracis.</title>
        <authorList>
            <person name="Ivanova N."/>
            <person name="Sorokin A."/>
            <person name="Anderson I."/>
            <person name="Galleron N."/>
            <person name="Candelon B."/>
            <person name="Kapatral V."/>
            <person name="Bhattacharyya A."/>
            <person name="Reznik G."/>
            <person name="Mikhailova N."/>
            <person name="Lapidus A."/>
            <person name="Chu L."/>
            <person name="Mazur M."/>
            <person name="Goltsman E."/>
            <person name="Larsen N."/>
            <person name="D'Souza M."/>
            <person name="Walunas T."/>
            <person name="Grechkin Y."/>
            <person name="Pusch G."/>
            <person name="Haselkorn R."/>
            <person name="Fonstein M."/>
            <person name="Ehrlich S.D."/>
            <person name="Overbeek R."/>
            <person name="Kyrpides N.C."/>
        </authorList>
    </citation>
    <scope>NUCLEOTIDE SEQUENCE [LARGE SCALE GENOMIC DNA]</scope>
    <source>
        <strain>ATCC 14579 / DSM 31 / CCUG 7414 / JCM 2152 / NBRC 15305 / NCIMB 9373 / NCTC 2599 / NRRL B-3711</strain>
    </source>
</reference>
<feature type="chain" id="PRO_0000106171" description="Nucleotide-binding protein BC_1159">
    <location>
        <begin position="1"/>
        <end position="163"/>
    </location>
</feature>
<name>Y1159_BACCR</name>